<accession>Q7Z4W2</accession>
<accession>Q6NZ69</accession>
<gene>
    <name type="primary">LYZL2</name>
</gene>
<protein>
    <recommendedName>
        <fullName>Lysozyme-like protein 2</fullName>
        <shortName>Lysozyme-2</shortName>
        <ecNumber>3.2.1.17</ecNumber>
    </recommendedName>
</protein>
<organism>
    <name type="scientific">Homo sapiens</name>
    <name type="common">Human</name>
    <dbReference type="NCBI Taxonomy" id="9606"/>
    <lineage>
        <taxon>Eukaryota</taxon>
        <taxon>Metazoa</taxon>
        <taxon>Chordata</taxon>
        <taxon>Craniata</taxon>
        <taxon>Vertebrata</taxon>
        <taxon>Euteleostomi</taxon>
        <taxon>Mammalia</taxon>
        <taxon>Eutheria</taxon>
        <taxon>Euarchontoglires</taxon>
        <taxon>Primates</taxon>
        <taxon>Haplorrhini</taxon>
        <taxon>Catarrhini</taxon>
        <taxon>Hominidae</taxon>
        <taxon>Homo</taxon>
    </lineage>
</organism>
<evidence type="ECO:0000255" key="1"/>
<evidence type="ECO:0000255" key="2">
    <source>
        <dbReference type="PROSITE-ProRule" id="PRU00680"/>
    </source>
</evidence>
<evidence type="ECO:0000269" key="3">
    <source>
    </source>
</evidence>
<evidence type="ECO:0000303" key="4">
    <source>
    </source>
</evidence>
<evidence type="ECO:0000305" key="5"/>
<sequence length="148" mass="16656">MKAAGILTLIGCLVTGAESKIYTRCKLAKIFSRAGLDNYWGFSLGNWICMAYYESGYNTTAQTVLDDGSIDYGIFQINSFAWCRRGKLKENNHCHVACSALVTDDLTDAIICAKKIVKETQGMNYWQGWKKHCEGRDLSDWKKDCEVS</sequence>
<comment type="catalytic activity">
    <reaction>
        <text>Hydrolysis of (1-&gt;4)-beta-linkages between N-acetylmuramic acid and N-acetyl-D-glucosamine residues in a peptidoglycan and between N-acetyl-D-glucosamine residues in chitodextrins.</text>
        <dbReference type="EC" id="3.2.1.17"/>
    </reaction>
</comment>
<comment type="subunit">
    <text evidence="5">Monomer.</text>
</comment>
<comment type="subcellular location">
    <subcellularLocation>
        <location evidence="5">Secreted</location>
    </subcellularLocation>
</comment>
<comment type="alternative products">
    <event type="alternative splicing"/>
    <isoform>
        <id>Q7Z4W2-1</id>
        <name>1</name>
        <sequence type="displayed"/>
    </isoform>
    <isoform>
        <id>Q7Z4W2-2</id>
        <name>2</name>
        <sequence type="described" ref="VSP_019717"/>
    </isoform>
</comment>
<comment type="tissue specificity">
    <text evidence="3">Expressed in testis, epididymis and placenta.</text>
</comment>
<comment type="similarity">
    <text evidence="2">Belongs to the glycosyl hydrolase 22 family.</text>
</comment>
<proteinExistence type="evidence at protein level"/>
<keyword id="KW-0025">Alternative splicing</keyword>
<keyword id="KW-1015">Disulfide bond</keyword>
<keyword id="KW-0325">Glycoprotein</keyword>
<keyword id="KW-0326">Glycosidase</keyword>
<keyword id="KW-0378">Hydrolase</keyword>
<keyword id="KW-1267">Proteomics identification</keyword>
<keyword id="KW-1185">Reference proteome</keyword>
<keyword id="KW-0964">Secreted</keyword>
<keyword id="KW-0732">Signal</keyword>
<name>LYZL2_HUMAN</name>
<feature type="signal peptide" evidence="1">
    <location>
        <begin position="1"/>
        <end position="19"/>
    </location>
</feature>
<feature type="chain" id="PRO_0000240637" description="Lysozyme-like protein 2">
    <location>
        <begin position="20"/>
        <end position="148"/>
    </location>
</feature>
<feature type="domain" description="C-type lysozyme" evidence="2">
    <location>
        <begin position="20"/>
        <end position="148"/>
    </location>
</feature>
<feature type="active site" evidence="2">
    <location>
        <position position="54"/>
    </location>
</feature>
<feature type="active site" evidence="2">
    <location>
        <position position="71"/>
    </location>
</feature>
<feature type="glycosylation site" description="N-linked (GlcNAc...) asparagine" evidence="1">
    <location>
        <position position="58"/>
    </location>
</feature>
<feature type="disulfide bond" evidence="2">
    <location>
        <begin position="25"/>
        <end position="145"/>
    </location>
</feature>
<feature type="disulfide bond" evidence="2">
    <location>
        <begin position="49"/>
        <end position="133"/>
    </location>
</feature>
<feature type="disulfide bond" evidence="2">
    <location>
        <begin position="83"/>
        <end position="98"/>
    </location>
</feature>
<feature type="disulfide bond" evidence="2">
    <location>
        <begin position="94"/>
        <end position="112"/>
    </location>
</feature>
<feature type="splice variant" id="VSP_019717" description="In isoform 2." evidence="4">
    <original>M</original>
    <variation>MQDAPLSCLSPTKWSSVSSADSTEKSASAAGTRNLPFQFCLRQALRM</variation>
    <location>
        <position position="1"/>
    </location>
</feature>
<feature type="sequence variant" id="VAR_026818" description="In dbSNP:rs1054570." evidence="3">
    <original>D</original>
    <variation>G</variation>
    <location>
        <position position="144"/>
    </location>
</feature>
<reference key="1">
    <citation type="journal article" date="2005" name="Biol. Reprod.">
        <title>Molecular cloning and characterization of three novel lysozyme-like genes, predominantly expressed in the male reproductive system of humans, belonging to the c-type lysozyme/alpha-lactalbumin family.</title>
        <authorList>
            <person name="Zhang K."/>
            <person name="Gao R."/>
            <person name="Zhang H."/>
            <person name="Cai X."/>
            <person name="Shen C."/>
            <person name="Wu C."/>
            <person name="Zhao S."/>
            <person name="Yu L."/>
        </authorList>
    </citation>
    <scope>NUCLEOTIDE SEQUENCE [MRNA] (ISOFORM 1)</scope>
    <scope>VARIANT GLY-144</scope>
    <scope>TISSUE SPECIFICITY</scope>
    <source>
        <tissue>Testis</tissue>
    </source>
</reference>
<reference key="2">
    <citation type="journal article" date="2004" name="Nature">
        <title>The DNA sequence and comparative analysis of human chromosome 10.</title>
        <authorList>
            <person name="Deloukas P."/>
            <person name="Earthrowl M.E."/>
            <person name="Grafham D.V."/>
            <person name="Rubenfield M."/>
            <person name="French L."/>
            <person name="Steward C.A."/>
            <person name="Sims S.K."/>
            <person name="Jones M.C."/>
            <person name="Searle S."/>
            <person name="Scott C."/>
            <person name="Howe K."/>
            <person name="Hunt S.E."/>
            <person name="Andrews T.D."/>
            <person name="Gilbert J.G.R."/>
            <person name="Swarbreck D."/>
            <person name="Ashurst J.L."/>
            <person name="Taylor A."/>
            <person name="Battles J."/>
            <person name="Bird C.P."/>
            <person name="Ainscough R."/>
            <person name="Almeida J.P."/>
            <person name="Ashwell R.I.S."/>
            <person name="Ambrose K.D."/>
            <person name="Babbage A.K."/>
            <person name="Bagguley C.L."/>
            <person name="Bailey J."/>
            <person name="Banerjee R."/>
            <person name="Bates K."/>
            <person name="Beasley H."/>
            <person name="Bray-Allen S."/>
            <person name="Brown A.J."/>
            <person name="Brown J.Y."/>
            <person name="Burford D.C."/>
            <person name="Burrill W."/>
            <person name="Burton J."/>
            <person name="Cahill P."/>
            <person name="Camire D."/>
            <person name="Carter N.P."/>
            <person name="Chapman J.C."/>
            <person name="Clark S.Y."/>
            <person name="Clarke G."/>
            <person name="Clee C.M."/>
            <person name="Clegg S."/>
            <person name="Corby N."/>
            <person name="Coulson A."/>
            <person name="Dhami P."/>
            <person name="Dutta I."/>
            <person name="Dunn M."/>
            <person name="Faulkner L."/>
            <person name="Frankish A."/>
            <person name="Frankland J.A."/>
            <person name="Garner P."/>
            <person name="Garnett J."/>
            <person name="Gribble S."/>
            <person name="Griffiths C."/>
            <person name="Grocock R."/>
            <person name="Gustafson E."/>
            <person name="Hammond S."/>
            <person name="Harley J.L."/>
            <person name="Hart E."/>
            <person name="Heath P.D."/>
            <person name="Ho T.P."/>
            <person name="Hopkins B."/>
            <person name="Horne J."/>
            <person name="Howden P.J."/>
            <person name="Huckle E."/>
            <person name="Hynds C."/>
            <person name="Johnson C."/>
            <person name="Johnson D."/>
            <person name="Kana A."/>
            <person name="Kay M."/>
            <person name="Kimberley A.M."/>
            <person name="Kershaw J.K."/>
            <person name="Kokkinaki M."/>
            <person name="Laird G.K."/>
            <person name="Lawlor S."/>
            <person name="Lee H.M."/>
            <person name="Leongamornlert D.A."/>
            <person name="Laird G."/>
            <person name="Lloyd C."/>
            <person name="Lloyd D.M."/>
            <person name="Loveland J."/>
            <person name="Lovell J."/>
            <person name="McLaren S."/>
            <person name="McLay K.E."/>
            <person name="McMurray A."/>
            <person name="Mashreghi-Mohammadi M."/>
            <person name="Matthews L."/>
            <person name="Milne S."/>
            <person name="Nickerson T."/>
            <person name="Nguyen M."/>
            <person name="Overton-Larty E."/>
            <person name="Palmer S.A."/>
            <person name="Pearce A.V."/>
            <person name="Peck A.I."/>
            <person name="Pelan S."/>
            <person name="Phillimore B."/>
            <person name="Porter K."/>
            <person name="Rice C.M."/>
            <person name="Rogosin A."/>
            <person name="Ross M.T."/>
            <person name="Sarafidou T."/>
            <person name="Sehra H.K."/>
            <person name="Shownkeen R."/>
            <person name="Skuce C.D."/>
            <person name="Smith M."/>
            <person name="Standring L."/>
            <person name="Sycamore N."/>
            <person name="Tester J."/>
            <person name="Thorpe A."/>
            <person name="Torcasso W."/>
            <person name="Tracey A."/>
            <person name="Tromans A."/>
            <person name="Tsolas J."/>
            <person name="Wall M."/>
            <person name="Walsh J."/>
            <person name="Wang H."/>
            <person name="Weinstock K."/>
            <person name="West A.P."/>
            <person name="Willey D.L."/>
            <person name="Whitehead S.L."/>
            <person name="Wilming L."/>
            <person name="Wray P.W."/>
            <person name="Young L."/>
            <person name="Chen Y."/>
            <person name="Lovering R.C."/>
            <person name="Moschonas N.K."/>
            <person name="Siebert R."/>
            <person name="Fechtel K."/>
            <person name="Bentley D."/>
            <person name="Durbin R.M."/>
            <person name="Hubbard T."/>
            <person name="Doucette-Stamm L."/>
            <person name="Beck S."/>
            <person name="Smith D.R."/>
            <person name="Rogers J."/>
        </authorList>
    </citation>
    <scope>NUCLEOTIDE SEQUENCE [LARGE SCALE GENOMIC DNA]</scope>
</reference>
<reference key="3">
    <citation type="journal article" date="2004" name="Genome Res.">
        <title>The status, quality, and expansion of the NIH full-length cDNA project: the Mammalian Gene Collection (MGC).</title>
        <authorList>
            <consortium name="The MGC Project Team"/>
        </authorList>
    </citation>
    <scope>NUCLEOTIDE SEQUENCE [LARGE SCALE MRNA] (ISOFORM 2)</scope>
    <source>
        <tissue>Testis</tissue>
    </source>
</reference>
<dbReference type="EC" id="3.2.1.17"/>
<dbReference type="EMBL" id="AF139543">
    <property type="protein sequence ID" value="AAP97272.1"/>
    <property type="molecule type" value="mRNA"/>
</dbReference>
<dbReference type="EMBL" id="AL451107">
    <property type="status" value="NOT_ANNOTATED_CDS"/>
    <property type="molecule type" value="Genomic_DNA"/>
</dbReference>
<dbReference type="EMBL" id="BC066294">
    <property type="protein sequence ID" value="AAH66294.1"/>
    <property type="molecule type" value="mRNA"/>
</dbReference>
<dbReference type="CCDS" id="CCDS7167.3">
    <molecule id="Q7Z4W2-1"/>
</dbReference>
<dbReference type="RefSeq" id="NP_898881.3">
    <molecule id="Q7Z4W2-1"/>
    <property type="nucleotide sequence ID" value="NM_183058.3"/>
</dbReference>
<dbReference type="SMR" id="Q7Z4W2"/>
<dbReference type="BioGRID" id="125634">
    <property type="interactions" value="94"/>
</dbReference>
<dbReference type="FunCoup" id="Q7Z4W2">
    <property type="interactions" value="54"/>
</dbReference>
<dbReference type="IntAct" id="Q7Z4W2">
    <property type="interactions" value="84"/>
</dbReference>
<dbReference type="STRING" id="9606.ENSP00000364467"/>
<dbReference type="CAZy" id="GH22">
    <property type="family name" value="Glycoside Hydrolase Family 22"/>
</dbReference>
<dbReference type="GlyCosmos" id="Q7Z4W2">
    <property type="glycosylation" value="1 site, No reported glycans"/>
</dbReference>
<dbReference type="GlyGen" id="Q7Z4W2">
    <property type="glycosylation" value="1 site"/>
</dbReference>
<dbReference type="iPTMnet" id="Q7Z4W2"/>
<dbReference type="PhosphoSitePlus" id="Q7Z4W2"/>
<dbReference type="BioMuta" id="LYZL2"/>
<dbReference type="DMDM" id="109892575"/>
<dbReference type="MassIVE" id="Q7Z4W2"/>
<dbReference type="PaxDb" id="9606-ENSP00000364467"/>
<dbReference type="PeptideAtlas" id="Q7Z4W2"/>
<dbReference type="ProteomicsDB" id="69251">
    <molecule id="Q7Z4W2-1"/>
</dbReference>
<dbReference type="ProteomicsDB" id="69252">
    <molecule id="Q7Z4W2-2"/>
</dbReference>
<dbReference type="Antibodypedia" id="26283">
    <property type="antibodies" value="41 antibodies from 12 providers"/>
</dbReference>
<dbReference type="DNASU" id="119180"/>
<dbReference type="Ensembl" id="ENST00000375318.4">
    <molecule id="Q7Z4W2-2"/>
    <property type="protein sequence ID" value="ENSP00000364467.2"/>
    <property type="gene ID" value="ENSG00000151033.10"/>
</dbReference>
<dbReference type="Ensembl" id="ENST00000647634.2">
    <molecule id="Q7Z4W2-1"/>
    <property type="protein sequence ID" value="ENSP00000497408.1"/>
    <property type="gene ID" value="ENSG00000151033.10"/>
</dbReference>
<dbReference type="GeneID" id="119180"/>
<dbReference type="KEGG" id="hsa:119180"/>
<dbReference type="MANE-Select" id="ENST00000647634.2">
    <property type="protein sequence ID" value="ENSP00000497408.1"/>
    <property type="RefSeq nucleotide sequence ID" value="NM_183058.3"/>
    <property type="RefSeq protein sequence ID" value="NP_898881.3"/>
</dbReference>
<dbReference type="UCSC" id="uc001ivk.4">
    <molecule id="Q7Z4W2-1"/>
    <property type="organism name" value="human"/>
</dbReference>
<dbReference type="AGR" id="HGNC:29613"/>
<dbReference type="CTD" id="119180"/>
<dbReference type="DisGeNET" id="119180"/>
<dbReference type="GeneCards" id="LYZL2"/>
<dbReference type="HGNC" id="HGNC:29613">
    <property type="gene designation" value="LYZL2"/>
</dbReference>
<dbReference type="HPA" id="ENSG00000151033">
    <property type="expression patterns" value="Tissue enriched (testis)"/>
</dbReference>
<dbReference type="MIM" id="612748">
    <property type="type" value="gene"/>
</dbReference>
<dbReference type="neXtProt" id="NX_Q7Z4W2"/>
<dbReference type="OpenTargets" id="ENSG00000151033"/>
<dbReference type="PharmGKB" id="PA134920379"/>
<dbReference type="VEuPathDB" id="HostDB:ENSG00000151033"/>
<dbReference type="eggNOG" id="ENOG502SCGK">
    <property type="taxonomic scope" value="Eukaryota"/>
</dbReference>
<dbReference type="GeneTree" id="ENSGT00940000159227"/>
<dbReference type="HOGENOM" id="CLU_111620_0_0_1"/>
<dbReference type="InParanoid" id="Q7Z4W2"/>
<dbReference type="OMA" id="GWSAWPG"/>
<dbReference type="OrthoDB" id="17373at2759"/>
<dbReference type="PAN-GO" id="Q7Z4W2">
    <property type="GO annotations" value="1 GO annotation based on evolutionary models"/>
</dbReference>
<dbReference type="PhylomeDB" id="Q7Z4W2"/>
<dbReference type="TreeFam" id="TF324882"/>
<dbReference type="PathwayCommons" id="Q7Z4W2"/>
<dbReference type="SignaLink" id="Q7Z4W2"/>
<dbReference type="BioGRID-ORCS" id="119180">
    <property type="hits" value="24 hits in 689 CRISPR screens"/>
</dbReference>
<dbReference type="GenomeRNAi" id="119180"/>
<dbReference type="Pharos" id="Q7Z4W2">
    <property type="development level" value="Tdark"/>
</dbReference>
<dbReference type="PRO" id="PR:Q7Z4W2"/>
<dbReference type="Proteomes" id="UP000005640">
    <property type="component" value="Chromosome 10"/>
</dbReference>
<dbReference type="RNAct" id="Q7Z4W2">
    <property type="molecule type" value="protein"/>
</dbReference>
<dbReference type="Bgee" id="ENSG00000151033">
    <property type="expression patterns" value="Expressed in left testis and 21 other cell types or tissues"/>
</dbReference>
<dbReference type="ExpressionAtlas" id="Q7Z4W2">
    <property type="expression patterns" value="baseline and differential"/>
</dbReference>
<dbReference type="GO" id="GO:0005576">
    <property type="term" value="C:extracellular region"/>
    <property type="evidence" value="ECO:0007669"/>
    <property type="project" value="UniProtKB-SubCell"/>
</dbReference>
<dbReference type="GO" id="GO:0003796">
    <property type="term" value="F:lysozyme activity"/>
    <property type="evidence" value="ECO:0000318"/>
    <property type="project" value="GO_Central"/>
</dbReference>
<dbReference type="CDD" id="cd16897">
    <property type="entry name" value="LYZ_C"/>
    <property type="match status" value="1"/>
</dbReference>
<dbReference type="FunFam" id="1.10.530.10:FF:000001">
    <property type="entry name" value="Lysozyme C"/>
    <property type="match status" value="1"/>
</dbReference>
<dbReference type="Gene3D" id="1.10.530.10">
    <property type="match status" value="1"/>
</dbReference>
<dbReference type="InterPro" id="IPR001916">
    <property type="entry name" value="Glyco_hydro_22"/>
</dbReference>
<dbReference type="InterPro" id="IPR019799">
    <property type="entry name" value="Glyco_hydro_22_CS"/>
</dbReference>
<dbReference type="InterPro" id="IPR000974">
    <property type="entry name" value="Glyco_hydro_22_lys"/>
</dbReference>
<dbReference type="InterPro" id="IPR023346">
    <property type="entry name" value="Lysozyme-like_dom_sf"/>
</dbReference>
<dbReference type="PANTHER" id="PTHR11407">
    <property type="entry name" value="LYSOZYME C"/>
    <property type="match status" value="1"/>
</dbReference>
<dbReference type="PANTHER" id="PTHR11407:SF62">
    <property type="entry name" value="LYSOZYME-LIKE PROTEIN 1-RELATED"/>
    <property type="match status" value="1"/>
</dbReference>
<dbReference type="Pfam" id="PF00062">
    <property type="entry name" value="Lys"/>
    <property type="match status" value="1"/>
</dbReference>
<dbReference type="PRINTS" id="PR00137">
    <property type="entry name" value="LYSOZYME"/>
</dbReference>
<dbReference type="PRINTS" id="PR00135">
    <property type="entry name" value="LYZLACT"/>
</dbReference>
<dbReference type="SMART" id="SM00263">
    <property type="entry name" value="LYZ1"/>
    <property type="match status" value="1"/>
</dbReference>
<dbReference type="SUPFAM" id="SSF53955">
    <property type="entry name" value="Lysozyme-like"/>
    <property type="match status" value="1"/>
</dbReference>
<dbReference type="PROSITE" id="PS00128">
    <property type="entry name" value="GLYCOSYL_HYDROL_F22_1"/>
    <property type="match status" value="1"/>
</dbReference>
<dbReference type="PROSITE" id="PS51348">
    <property type="entry name" value="GLYCOSYL_HYDROL_F22_2"/>
    <property type="match status" value="1"/>
</dbReference>